<comment type="function">
    <text evidence="2">Alpha-conopeptides-like may act on postsynaptic membranes, they bind to the nicotinic acetylcholine receptors (nAChR) and thus inhibit them (By similarity). Has possibly a distinct nAChR binding mode from other alpha-conotoxins, due to a different three residue motif (lacks the Ser-Xaa-Pro motif) (By similarity).</text>
</comment>
<comment type="subcellular location">
    <subcellularLocation>
        <location evidence="5">Secreted</location>
    </subcellularLocation>
</comment>
<comment type="tissue specificity">
    <text evidence="5">Expressed by the salivary gland.</text>
</comment>
<comment type="domain">
    <text evidence="4">The cysteine framework is I (CC-C-C). Alpha4/7 pattern.</text>
</comment>
<comment type="similarity">
    <text evidence="4">Belongs to the conotoxin A superfamily.</text>
</comment>
<proteinExistence type="inferred from homology"/>
<evidence type="ECO:0000250" key="1">
    <source>
        <dbReference type="UniProtKB" id="P56636"/>
    </source>
</evidence>
<evidence type="ECO:0000250" key="2">
    <source>
        <dbReference type="UniProtKB" id="Q2I2R8"/>
    </source>
</evidence>
<evidence type="ECO:0000255" key="3"/>
<evidence type="ECO:0000305" key="4"/>
<evidence type="ECO:0000305" key="5">
    <source>
    </source>
</evidence>
<feature type="signal peptide" evidence="3">
    <location>
        <begin position="1"/>
        <end position="21"/>
    </location>
</feature>
<feature type="propeptide" id="PRO_0000366058" evidence="3">
    <location>
        <begin position="22"/>
        <end position="43"/>
    </location>
</feature>
<feature type="peptide" id="PRO_0000366059" description="Alpha-conotoxin-like PuSG1.1">
    <location>
        <begin position="44"/>
        <end position="63"/>
    </location>
</feature>
<feature type="region of interest" description="Lacks the Ser-Xaa-Pro motif that is crucial for potent interaction with nAChR" evidence="4">
    <location>
        <begin position="48"/>
        <end position="50"/>
    </location>
</feature>
<feature type="disulfide bond" evidence="1">
    <location>
        <begin position="46"/>
        <end position="52"/>
    </location>
</feature>
<feature type="disulfide bond" evidence="1">
    <location>
        <begin position="47"/>
        <end position="60"/>
    </location>
</feature>
<organism>
    <name type="scientific">Conus pulicarius</name>
    <name type="common">Flea-bitten cone</name>
    <dbReference type="NCBI Taxonomy" id="93154"/>
    <lineage>
        <taxon>Eukaryota</taxon>
        <taxon>Metazoa</taxon>
        <taxon>Spiralia</taxon>
        <taxon>Lophotrochozoa</taxon>
        <taxon>Mollusca</taxon>
        <taxon>Gastropoda</taxon>
        <taxon>Caenogastropoda</taxon>
        <taxon>Neogastropoda</taxon>
        <taxon>Conoidea</taxon>
        <taxon>Conidae</taxon>
        <taxon>Conus</taxon>
    </lineage>
</organism>
<accession>P0C8U6</accession>
<dbReference type="ConoServer" id="2861">
    <property type="toxin name" value="PuSG1.1 precursor"/>
</dbReference>
<dbReference type="GO" id="GO:0005576">
    <property type="term" value="C:extracellular region"/>
    <property type="evidence" value="ECO:0007669"/>
    <property type="project" value="UniProtKB-SubCell"/>
</dbReference>
<dbReference type="GO" id="GO:0035792">
    <property type="term" value="C:host cell postsynaptic membrane"/>
    <property type="evidence" value="ECO:0007669"/>
    <property type="project" value="UniProtKB-KW"/>
</dbReference>
<dbReference type="GO" id="GO:0030550">
    <property type="term" value="F:acetylcholine receptor inhibitor activity"/>
    <property type="evidence" value="ECO:0007669"/>
    <property type="project" value="UniProtKB-KW"/>
</dbReference>
<dbReference type="GO" id="GO:0099106">
    <property type="term" value="F:ion channel regulator activity"/>
    <property type="evidence" value="ECO:0007669"/>
    <property type="project" value="UniProtKB-KW"/>
</dbReference>
<dbReference type="GO" id="GO:0090729">
    <property type="term" value="F:toxin activity"/>
    <property type="evidence" value="ECO:0007669"/>
    <property type="project" value="UniProtKB-KW"/>
</dbReference>
<dbReference type="InterPro" id="IPR009958">
    <property type="entry name" value="Conotoxin_a-typ"/>
</dbReference>
<dbReference type="Pfam" id="PF07365">
    <property type="entry name" value="Toxin_8"/>
    <property type="match status" value="1"/>
</dbReference>
<protein>
    <recommendedName>
        <fullName>Alpha-conotoxin-like PuSG1.1</fullName>
    </recommendedName>
</protein>
<keyword id="KW-0008">Acetylcholine receptor inhibiting toxin</keyword>
<keyword id="KW-1015">Disulfide bond</keyword>
<keyword id="KW-0872">Ion channel impairing toxin</keyword>
<keyword id="KW-0528">Neurotoxin</keyword>
<keyword id="KW-0629">Postsynaptic neurotoxin</keyword>
<keyword id="KW-0964">Secreted</keyword>
<keyword id="KW-0732">Signal</keyword>
<keyword id="KW-0800">Toxin</keyword>
<reference key="1">
    <citation type="journal article" date="2008" name="Toxicon">
        <title>Alpha-conopeptides specifically expressed in the salivary gland of Conus pulicarius.</title>
        <authorList>
            <person name="Biggs J.S."/>
            <person name="Olivera B.M."/>
            <person name="Kantor Y.I."/>
        </authorList>
    </citation>
    <scope>NUCLEOTIDE SEQUENCE [MRNA]</scope>
    <source>
        <tissue>Salivary gland</tissue>
    </source>
</reference>
<sequence>MRCLAFLVVTLLLFTATATTGASNGMNAAASGEAPDSISLAVRDDCCPDPACRQNHPELCSTR</sequence>
<name>CA1S1_CONPL</name>